<dbReference type="EC" id="4.2.1.11" evidence="1"/>
<dbReference type="EMBL" id="CP001215">
    <property type="protein sequence ID" value="ACP12418.1"/>
    <property type="molecule type" value="Genomic_DNA"/>
</dbReference>
<dbReference type="RefSeq" id="WP_000103949.1">
    <property type="nucleotide sequence ID" value="NC_012581.1"/>
</dbReference>
<dbReference type="SMR" id="C3LDI0"/>
<dbReference type="GeneID" id="83638809"/>
<dbReference type="KEGG" id="bah:BAMEG_5417"/>
<dbReference type="HOGENOM" id="CLU_031223_2_1_9"/>
<dbReference type="UniPathway" id="UPA00109">
    <property type="reaction ID" value="UER00187"/>
</dbReference>
<dbReference type="GO" id="GO:0009986">
    <property type="term" value="C:cell surface"/>
    <property type="evidence" value="ECO:0007669"/>
    <property type="project" value="UniProtKB-SubCell"/>
</dbReference>
<dbReference type="GO" id="GO:0005576">
    <property type="term" value="C:extracellular region"/>
    <property type="evidence" value="ECO:0007669"/>
    <property type="project" value="UniProtKB-SubCell"/>
</dbReference>
<dbReference type="GO" id="GO:0000015">
    <property type="term" value="C:phosphopyruvate hydratase complex"/>
    <property type="evidence" value="ECO:0007669"/>
    <property type="project" value="InterPro"/>
</dbReference>
<dbReference type="GO" id="GO:0000287">
    <property type="term" value="F:magnesium ion binding"/>
    <property type="evidence" value="ECO:0007669"/>
    <property type="project" value="UniProtKB-UniRule"/>
</dbReference>
<dbReference type="GO" id="GO:0004634">
    <property type="term" value="F:phosphopyruvate hydratase activity"/>
    <property type="evidence" value="ECO:0007669"/>
    <property type="project" value="UniProtKB-UniRule"/>
</dbReference>
<dbReference type="GO" id="GO:0006096">
    <property type="term" value="P:glycolytic process"/>
    <property type="evidence" value="ECO:0007669"/>
    <property type="project" value="UniProtKB-UniRule"/>
</dbReference>
<dbReference type="CDD" id="cd03313">
    <property type="entry name" value="enolase"/>
    <property type="match status" value="1"/>
</dbReference>
<dbReference type="FunFam" id="3.20.20.120:FF:000001">
    <property type="entry name" value="Enolase"/>
    <property type="match status" value="1"/>
</dbReference>
<dbReference type="FunFam" id="3.30.390.10:FF:000001">
    <property type="entry name" value="Enolase"/>
    <property type="match status" value="1"/>
</dbReference>
<dbReference type="Gene3D" id="3.20.20.120">
    <property type="entry name" value="Enolase-like C-terminal domain"/>
    <property type="match status" value="1"/>
</dbReference>
<dbReference type="Gene3D" id="3.30.390.10">
    <property type="entry name" value="Enolase-like, N-terminal domain"/>
    <property type="match status" value="1"/>
</dbReference>
<dbReference type="HAMAP" id="MF_00318">
    <property type="entry name" value="Enolase"/>
    <property type="match status" value="1"/>
</dbReference>
<dbReference type="InterPro" id="IPR000941">
    <property type="entry name" value="Enolase"/>
</dbReference>
<dbReference type="InterPro" id="IPR036849">
    <property type="entry name" value="Enolase-like_C_sf"/>
</dbReference>
<dbReference type="InterPro" id="IPR029017">
    <property type="entry name" value="Enolase-like_N"/>
</dbReference>
<dbReference type="InterPro" id="IPR020810">
    <property type="entry name" value="Enolase_C"/>
</dbReference>
<dbReference type="InterPro" id="IPR020809">
    <property type="entry name" value="Enolase_CS"/>
</dbReference>
<dbReference type="InterPro" id="IPR020811">
    <property type="entry name" value="Enolase_N"/>
</dbReference>
<dbReference type="NCBIfam" id="TIGR01060">
    <property type="entry name" value="eno"/>
    <property type="match status" value="1"/>
</dbReference>
<dbReference type="PANTHER" id="PTHR11902">
    <property type="entry name" value="ENOLASE"/>
    <property type="match status" value="1"/>
</dbReference>
<dbReference type="PANTHER" id="PTHR11902:SF1">
    <property type="entry name" value="ENOLASE"/>
    <property type="match status" value="1"/>
</dbReference>
<dbReference type="Pfam" id="PF00113">
    <property type="entry name" value="Enolase_C"/>
    <property type="match status" value="1"/>
</dbReference>
<dbReference type="Pfam" id="PF03952">
    <property type="entry name" value="Enolase_N"/>
    <property type="match status" value="1"/>
</dbReference>
<dbReference type="PIRSF" id="PIRSF001400">
    <property type="entry name" value="Enolase"/>
    <property type="match status" value="1"/>
</dbReference>
<dbReference type="PRINTS" id="PR00148">
    <property type="entry name" value="ENOLASE"/>
</dbReference>
<dbReference type="SFLD" id="SFLDS00001">
    <property type="entry name" value="Enolase"/>
    <property type="match status" value="1"/>
</dbReference>
<dbReference type="SFLD" id="SFLDF00002">
    <property type="entry name" value="enolase"/>
    <property type="match status" value="1"/>
</dbReference>
<dbReference type="SMART" id="SM01192">
    <property type="entry name" value="Enolase_C"/>
    <property type="match status" value="1"/>
</dbReference>
<dbReference type="SMART" id="SM01193">
    <property type="entry name" value="Enolase_N"/>
    <property type="match status" value="1"/>
</dbReference>
<dbReference type="SUPFAM" id="SSF51604">
    <property type="entry name" value="Enolase C-terminal domain-like"/>
    <property type="match status" value="1"/>
</dbReference>
<dbReference type="SUPFAM" id="SSF54826">
    <property type="entry name" value="Enolase N-terminal domain-like"/>
    <property type="match status" value="1"/>
</dbReference>
<dbReference type="PROSITE" id="PS00164">
    <property type="entry name" value="ENOLASE"/>
    <property type="match status" value="1"/>
</dbReference>
<organism>
    <name type="scientific">Bacillus anthracis (strain CDC 684 / NRRL 3495)</name>
    <dbReference type="NCBI Taxonomy" id="568206"/>
    <lineage>
        <taxon>Bacteria</taxon>
        <taxon>Bacillati</taxon>
        <taxon>Bacillota</taxon>
        <taxon>Bacilli</taxon>
        <taxon>Bacillales</taxon>
        <taxon>Bacillaceae</taxon>
        <taxon>Bacillus</taxon>
        <taxon>Bacillus cereus group</taxon>
    </lineage>
</organism>
<comment type="function">
    <text evidence="1">Catalyzes the reversible conversion of 2-phosphoglycerate (2-PG) into phosphoenolpyruvate (PEP). It is essential for the degradation of carbohydrates via glycolysis.</text>
</comment>
<comment type="catalytic activity">
    <reaction evidence="1">
        <text>(2R)-2-phosphoglycerate = phosphoenolpyruvate + H2O</text>
        <dbReference type="Rhea" id="RHEA:10164"/>
        <dbReference type="ChEBI" id="CHEBI:15377"/>
        <dbReference type="ChEBI" id="CHEBI:58289"/>
        <dbReference type="ChEBI" id="CHEBI:58702"/>
        <dbReference type="EC" id="4.2.1.11"/>
    </reaction>
</comment>
<comment type="cofactor">
    <cofactor evidence="1">
        <name>Mg(2+)</name>
        <dbReference type="ChEBI" id="CHEBI:18420"/>
    </cofactor>
    <text evidence="1">Binds a second Mg(2+) ion via substrate during catalysis.</text>
</comment>
<comment type="pathway">
    <text evidence="1">Carbohydrate degradation; glycolysis; pyruvate from D-glyceraldehyde 3-phosphate: step 4/5.</text>
</comment>
<comment type="subcellular location">
    <subcellularLocation>
        <location evidence="1">Cytoplasm</location>
    </subcellularLocation>
    <subcellularLocation>
        <location evidence="1">Secreted</location>
    </subcellularLocation>
    <subcellularLocation>
        <location evidence="1">Cell surface</location>
    </subcellularLocation>
    <text evidence="1">Fractions of enolase are present in both the cytoplasm and on the cell surface.</text>
</comment>
<comment type="similarity">
    <text evidence="1">Belongs to the enolase family.</text>
</comment>
<protein>
    <recommendedName>
        <fullName evidence="1">Enolase</fullName>
        <ecNumber evidence="1">4.2.1.11</ecNumber>
    </recommendedName>
    <alternativeName>
        <fullName evidence="1">2-phospho-D-glycerate hydro-lyase</fullName>
    </alternativeName>
    <alternativeName>
        <fullName evidence="1">2-phosphoglycerate dehydratase</fullName>
    </alternativeName>
</protein>
<keyword id="KW-0963">Cytoplasm</keyword>
<keyword id="KW-0324">Glycolysis</keyword>
<keyword id="KW-0456">Lyase</keyword>
<keyword id="KW-0460">Magnesium</keyword>
<keyword id="KW-0479">Metal-binding</keyword>
<keyword id="KW-0964">Secreted</keyword>
<sequence length="431" mass="46418">MSTIIDVYAREVLDSRGNPTVEVEVYTESGAFGRAIVPSGASTGEHEAVELRDGDKSRYLGKGVMNAVNNVNEAIAPEIVGFDVTDQAGIDRAMIELDGTPNKGKLGANAILGVSMAVAHAAADFVGLPLYRYLGGFNAKQLPTPMMNIINGGSHADNNVDFQEFMILPVGAPTFKESIRMGAEVFHALKAVLHDKGLNTAVGDEGGFAPNLGSNREALEVIIEAIEKAGYKAGENVFLGMDVASSEFYNKETGKYDLAGEGRTGLTSAEMVDFYEELCKDFPIISIEDGLDENDWDGHKLLTERIGDKVQLVGDDLFVTNTQKLAEGIEKGISNSILIKVNQIGTLTETFEAIEMAKRAGYTAVVSHRSGETEDATIADIAVATNAGQIKTGSMSRTDRIAKYNQLLRIEDELGEIAVYDGIKSFYNIKR</sequence>
<reference key="1">
    <citation type="submission" date="2008-10" db="EMBL/GenBank/DDBJ databases">
        <title>Genome sequence of Bacillus anthracis str. CDC 684.</title>
        <authorList>
            <person name="Dodson R.J."/>
            <person name="Munk A.C."/>
            <person name="Brettin T."/>
            <person name="Bruce D."/>
            <person name="Detter C."/>
            <person name="Tapia R."/>
            <person name="Han C."/>
            <person name="Sutton G."/>
            <person name="Sims D."/>
        </authorList>
    </citation>
    <scope>NUCLEOTIDE SEQUENCE [LARGE SCALE GENOMIC DNA]</scope>
    <source>
        <strain>CDC 684 / NRRL 3495</strain>
    </source>
</reference>
<evidence type="ECO:0000255" key="1">
    <source>
        <dbReference type="HAMAP-Rule" id="MF_00318"/>
    </source>
</evidence>
<gene>
    <name evidence="1" type="primary">eno</name>
    <name type="ordered locus">BAMEG_5417</name>
</gene>
<feature type="chain" id="PRO_1000132982" description="Enolase">
    <location>
        <begin position="1"/>
        <end position="431"/>
    </location>
</feature>
<feature type="active site" description="Proton donor" evidence="1">
    <location>
        <position position="205"/>
    </location>
</feature>
<feature type="active site" description="Proton acceptor" evidence="1">
    <location>
        <position position="340"/>
    </location>
</feature>
<feature type="binding site" evidence="1">
    <location>
        <position position="163"/>
    </location>
    <ligand>
        <name>(2R)-2-phosphoglycerate</name>
        <dbReference type="ChEBI" id="CHEBI:58289"/>
    </ligand>
</feature>
<feature type="binding site" evidence="1">
    <location>
        <position position="242"/>
    </location>
    <ligand>
        <name>Mg(2+)</name>
        <dbReference type="ChEBI" id="CHEBI:18420"/>
    </ligand>
</feature>
<feature type="binding site" evidence="1">
    <location>
        <position position="288"/>
    </location>
    <ligand>
        <name>Mg(2+)</name>
        <dbReference type="ChEBI" id="CHEBI:18420"/>
    </ligand>
</feature>
<feature type="binding site" evidence="1">
    <location>
        <position position="315"/>
    </location>
    <ligand>
        <name>Mg(2+)</name>
        <dbReference type="ChEBI" id="CHEBI:18420"/>
    </ligand>
</feature>
<feature type="binding site" evidence="1">
    <location>
        <position position="340"/>
    </location>
    <ligand>
        <name>(2R)-2-phosphoglycerate</name>
        <dbReference type="ChEBI" id="CHEBI:58289"/>
    </ligand>
</feature>
<feature type="binding site" evidence="1">
    <location>
        <position position="369"/>
    </location>
    <ligand>
        <name>(2R)-2-phosphoglycerate</name>
        <dbReference type="ChEBI" id="CHEBI:58289"/>
    </ligand>
</feature>
<feature type="binding site" evidence="1">
    <location>
        <position position="370"/>
    </location>
    <ligand>
        <name>(2R)-2-phosphoglycerate</name>
        <dbReference type="ChEBI" id="CHEBI:58289"/>
    </ligand>
</feature>
<feature type="binding site" evidence="1">
    <location>
        <position position="391"/>
    </location>
    <ligand>
        <name>(2R)-2-phosphoglycerate</name>
        <dbReference type="ChEBI" id="CHEBI:58289"/>
    </ligand>
</feature>
<accession>C3LDI0</accession>
<proteinExistence type="inferred from homology"/>
<name>ENO_BACAC</name>